<evidence type="ECO:0000255" key="1">
    <source>
        <dbReference type="HAMAP-Rule" id="MF_00366"/>
    </source>
</evidence>
<feature type="chain" id="PRO_1000194803" description="DNA-directed RNA polymerase subunit omega">
    <location>
        <begin position="1"/>
        <end position="110"/>
    </location>
</feature>
<dbReference type="EC" id="2.7.7.6" evidence="1"/>
<dbReference type="EMBL" id="AP010918">
    <property type="protein sequence ID" value="BAH25714.1"/>
    <property type="molecule type" value="Genomic_DNA"/>
</dbReference>
<dbReference type="RefSeq" id="WP_003407248.1">
    <property type="nucleotide sequence ID" value="NZ_CP014566.1"/>
</dbReference>
<dbReference type="SMR" id="C1AN35"/>
<dbReference type="GeneID" id="45425368"/>
<dbReference type="KEGG" id="mbt:JTY_1426"/>
<dbReference type="HOGENOM" id="CLU_125406_1_1_11"/>
<dbReference type="GO" id="GO:0000428">
    <property type="term" value="C:DNA-directed RNA polymerase complex"/>
    <property type="evidence" value="ECO:0007669"/>
    <property type="project" value="UniProtKB-KW"/>
</dbReference>
<dbReference type="GO" id="GO:0003677">
    <property type="term" value="F:DNA binding"/>
    <property type="evidence" value="ECO:0007669"/>
    <property type="project" value="UniProtKB-UniRule"/>
</dbReference>
<dbReference type="GO" id="GO:0003899">
    <property type="term" value="F:DNA-directed RNA polymerase activity"/>
    <property type="evidence" value="ECO:0007669"/>
    <property type="project" value="UniProtKB-UniRule"/>
</dbReference>
<dbReference type="GO" id="GO:0006351">
    <property type="term" value="P:DNA-templated transcription"/>
    <property type="evidence" value="ECO:0007669"/>
    <property type="project" value="UniProtKB-UniRule"/>
</dbReference>
<dbReference type="FunFam" id="3.90.940.10:FF:000002">
    <property type="entry name" value="DNA-directed RNA polymerase subunit omega"/>
    <property type="match status" value="1"/>
</dbReference>
<dbReference type="Gene3D" id="3.90.940.10">
    <property type="match status" value="1"/>
</dbReference>
<dbReference type="HAMAP" id="MF_00366">
    <property type="entry name" value="RNApol_bact_RpoZ"/>
    <property type="match status" value="1"/>
</dbReference>
<dbReference type="InterPro" id="IPR003716">
    <property type="entry name" value="DNA-dir_RNA_pol_omega"/>
</dbReference>
<dbReference type="InterPro" id="IPR006110">
    <property type="entry name" value="Pol_omega/Rpo6/RPB6"/>
</dbReference>
<dbReference type="InterPro" id="IPR036161">
    <property type="entry name" value="RPB6/omega-like_sf"/>
</dbReference>
<dbReference type="NCBIfam" id="TIGR00690">
    <property type="entry name" value="rpoZ"/>
    <property type="match status" value="1"/>
</dbReference>
<dbReference type="PANTHER" id="PTHR34476">
    <property type="entry name" value="DNA-DIRECTED RNA POLYMERASE SUBUNIT OMEGA"/>
    <property type="match status" value="1"/>
</dbReference>
<dbReference type="PANTHER" id="PTHR34476:SF1">
    <property type="entry name" value="DNA-DIRECTED RNA POLYMERASE SUBUNIT OMEGA"/>
    <property type="match status" value="1"/>
</dbReference>
<dbReference type="Pfam" id="PF01192">
    <property type="entry name" value="RNA_pol_Rpb6"/>
    <property type="match status" value="1"/>
</dbReference>
<dbReference type="SMART" id="SM01409">
    <property type="entry name" value="RNA_pol_Rpb6"/>
    <property type="match status" value="1"/>
</dbReference>
<dbReference type="SUPFAM" id="SSF63562">
    <property type="entry name" value="RPB6/omega subunit-like"/>
    <property type="match status" value="1"/>
</dbReference>
<reference key="1">
    <citation type="journal article" date="2009" name="Vaccine">
        <title>Whole genome sequence analysis of Mycobacterium bovis bacillus Calmette-Guerin (BCG) Tokyo 172: a comparative study of BCG vaccine substrains.</title>
        <authorList>
            <person name="Seki M."/>
            <person name="Honda I."/>
            <person name="Fujita I."/>
            <person name="Yano I."/>
            <person name="Yamamoto S."/>
            <person name="Koyama A."/>
        </authorList>
    </citation>
    <scope>NUCLEOTIDE SEQUENCE [LARGE SCALE GENOMIC DNA]</scope>
    <source>
        <strain>BCG / Tokyo 172 / ATCC 35737 / TMC 1019</strain>
    </source>
</reference>
<protein>
    <recommendedName>
        <fullName evidence="1">DNA-directed RNA polymerase subunit omega</fullName>
        <shortName evidence="1">RNAP omega subunit</shortName>
        <ecNumber evidence="1">2.7.7.6</ecNumber>
    </recommendedName>
    <alternativeName>
        <fullName evidence="1">RNA polymerase omega subunit</fullName>
    </alternativeName>
    <alternativeName>
        <fullName evidence="1">Transcriptase subunit omega</fullName>
    </alternativeName>
</protein>
<name>RPOZ_MYCBT</name>
<comment type="function">
    <text evidence="1">Promotes RNA polymerase assembly. Latches the N- and C-terminal regions of the beta' subunit thereby facilitating its interaction with the beta and alpha subunits.</text>
</comment>
<comment type="catalytic activity">
    <reaction evidence="1">
        <text>RNA(n) + a ribonucleoside 5'-triphosphate = RNA(n+1) + diphosphate</text>
        <dbReference type="Rhea" id="RHEA:21248"/>
        <dbReference type="Rhea" id="RHEA-COMP:14527"/>
        <dbReference type="Rhea" id="RHEA-COMP:17342"/>
        <dbReference type="ChEBI" id="CHEBI:33019"/>
        <dbReference type="ChEBI" id="CHEBI:61557"/>
        <dbReference type="ChEBI" id="CHEBI:140395"/>
        <dbReference type="EC" id="2.7.7.6"/>
    </reaction>
</comment>
<comment type="subunit">
    <text evidence="1">The RNAP catalytic core consists of 2 alpha, 1 beta, 1 beta' and 1 omega subunit. When a sigma factor is associated with the core the holoenzyme is formed, which can initiate transcription.</text>
</comment>
<comment type="similarity">
    <text evidence="1">Belongs to the RNA polymerase subunit omega family.</text>
</comment>
<sequence length="110" mass="11842">MSISQSDASLAAVPAVDQFDPSSGASGGYDTPLGITNPPIDELLDRVSSKYALVIYAAKRARQINDYYNQLGEGILEYVGPLVEPGLQEKPLSIALREIHADLLEHTEGE</sequence>
<accession>C1AN35</accession>
<organism>
    <name type="scientific">Mycobacterium bovis (strain BCG / Tokyo 172 / ATCC 35737 / TMC 1019)</name>
    <dbReference type="NCBI Taxonomy" id="561275"/>
    <lineage>
        <taxon>Bacteria</taxon>
        <taxon>Bacillati</taxon>
        <taxon>Actinomycetota</taxon>
        <taxon>Actinomycetes</taxon>
        <taxon>Mycobacteriales</taxon>
        <taxon>Mycobacteriaceae</taxon>
        <taxon>Mycobacterium</taxon>
        <taxon>Mycobacterium tuberculosis complex</taxon>
    </lineage>
</organism>
<gene>
    <name evidence="1" type="primary">rpoZ</name>
    <name type="ordered locus">JTY_1426</name>
</gene>
<keyword id="KW-0240">DNA-directed RNA polymerase</keyword>
<keyword id="KW-0548">Nucleotidyltransferase</keyword>
<keyword id="KW-0804">Transcription</keyword>
<keyword id="KW-0808">Transferase</keyword>
<proteinExistence type="inferred from homology"/>